<protein>
    <recommendedName>
        <fullName evidence="1">Small ribosomal subunit protein uS17</fullName>
    </recommendedName>
    <alternativeName>
        <fullName evidence="2">30S ribosomal protein S17</fullName>
    </alternativeName>
</protein>
<comment type="function">
    <text evidence="1">One of the primary rRNA binding proteins, it binds specifically to the 5'-end of 16S ribosomal RNA.</text>
</comment>
<comment type="subunit">
    <text evidence="1">Part of the 30S ribosomal subunit.</text>
</comment>
<comment type="similarity">
    <text evidence="1">Belongs to the universal ribosomal protein uS17 family.</text>
</comment>
<accession>A7HZL5</accession>
<sequence length="83" mass="9509">MAFKREIHGLVVKKAGDKTATILVERRVMHPRYRKFVKKFKKYLVHDEKNAVKIGDTISAVECRPLSAKKSFRLKAVLKAGVE</sequence>
<keyword id="KW-1185">Reference proteome</keyword>
<keyword id="KW-0687">Ribonucleoprotein</keyword>
<keyword id="KW-0689">Ribosomal protein</keyword>
<keyword id="KW-0694">RNA-binding</keyword>
<keyword id="KW-0699">rRNA-binding</keyword>
<name>RS17_CAMHC</name>
<reference key="1">
    <citation type="submission" date="2007-07" db="EMBL/GenBank/DDBJ databases">
        <title>Complete genome sequence of Campylobacter hominis ATCC BAA-381, a commensal isolated from the human gastrointestinal tract.</title>
        <authorList>
            <person name="Fouts D.E."/>
            <person name="Mongodin E.F."/>
            <person name="Puiu D."/>
            <person name="Sebastian Y."/>
            <person name="Miller W.G."/>
            <person name="Mandrell R.E."/>
            <person name="Nelson K.E."/>
        </authorList>
    </citation>
    <scope>NUCLEOTIDE SEQUENCE [LARGE SCALE GENOMIC DNA]</scope>
    <source>
        <strain>ATCC BAA-381 / DSM 21671 / CCUG 45161 / LMG 19568 / NCTC 13146 / CH001A</strain>
    </source>
</reference>
<evidence type="ECO:0000255" key="1">
    <source>
        <dbReference type="HAMAP-Rule" id="MF_01345"/>
    </source>
</evidence>
<evidence type="ECO:0000305" key="2"/>
<proteinExistence type="inferred from homology"/>
<dbReference type="EMBL" id="CP000776">
    <property type="protein sequence ID" value="ABS51111.1"/>
    <property type="molecule type" value="Genomic_DNA"/>
</dbReference>
<dbReference type="RefSeq" id="WP_011991553.1">
    <property type="nucleotide sequence ID" value="NC_009714.1"/>
</dbReference>
<dbReference type="SMR" id="A7HZL5"/>
<dbReference type="STRING" id="360107.CHAB381_0093"/>
<dbReference type="KEGG" id="cha:CHAB381_0093"/>
<dbReference type="eggNOG" id="COG0186">
    <property type="taxonomic scope" value="Bacteria"/>
</dbReference>
<dbReference type="HOGENOM" id="CLU_073626_1_1_7"/>
<dbReference type="OrthoDB" id="9811714at2"/>
<dbReference type="Proteomes" id="UP000002407">
    <property type="component" value="Chromosome"/>
</dbReference>
<dbReference type="GO" id="GO:0022627">
    <property type="term" value="C:cytosolic small ribosomal subunit"/>
    <property type="evidence" value="ECO:0007669"/>
    <property type="project" value="TreeGrafter"/>
</dbReference>
<dbReference type="GO" id="GO:0019843">
    <property type="term" value="F:rRNA binding"/>
    <property type="evidence" value="ECO:0007669"/>
    <property type="project" value="UniProtKB-UniRule"/>
</dbReference>
<dbReference type="GO" id="GO:0003735">
    <property type="term" value="F:structural constituent of ribosome"/>
    <property type="evidence" value="ECO:0007669"/>
    <property type="project" value="InterPro"/>
</dbReference>
<dbReference type="GO" id="GO:0006412">
    <property type="term" value="P:translation"/>
    <property type="evidence" value="ECO:0007669"/>
    <property type="project" value="UniProtKB-UniRule"/>
</dbReference>
<dbReference type="CDD" id="cd00364">
    <property type="entry name" value="Ribosomal_uS17"/>
    <property type="match status" value="1"/>
</dbReference>
<dbReference type="Gene3D" id="2.40.50.140">
    <property type="entry name" value="Nucleic acid-binding proteins"/>
    <property type="match status" value="1"/>
</dbReference>
<dbReference type="HAMAP" id="MF_01345_B">
    <property type="entry name" value="Ribosomal_uS17_B"/>
    <property type="match status" value="1"/>
</dbReference>
<dbReference type="InterPro" id="IPR012340">
    <property type="entry name" value="NA-bd_OB-fold"/>
</dbReference>
<dbReference type="InterPro" id="IPR000266">
    <property type="entry name" value="Ribosomal_uS17"/>
</dbReference>
<dbReference type="InterPro" id="IPR019984">
    <property type="entry name" value="Ribosomal_uS17_bact/chlr"/>
</dbReference>
<dbReference type="InterPro" id="IPR019979">
    <property type="entry name" value="Ribosomal_uS17_CS"/>
</dbReference>
<dbReference type="NCBIfam" id="NF004123">
    <property type="entry name" value="PRK05610.1"/>
    <property type="match status" value="1"/>
</dbReference>
<dbReference type="NCBIfam" id="TIGR03635">
    <property type="entry name" value="uS17_bact"/>
    <property type="match status" value="1"/>
</dbReference>
<dbReference type="PANTHER" id="PTHR10744">
    <property type="entry name" value="40S RIBOSOMAL PROTEIN S11 FAMILY MEMBER"/>
    <property type="match status" value="1"/>
</dbReference>
<dbReference type="PANTHER" id="PTHR10744:SF1">
    <property type="entry name" value="SMALL RIBOSOMAL SUBUNIT PROTEIN US17M"/>
    <property type="match status" value="1"/>
</dbReference>
<dbReference type="Pfam" id="PF00366">
    <property type="entry name" value="Ribosomal_S17"/>
    <property type="match status" value="1"/>
</dbReference>
<dbReference type="PRINTS" id="PR00973">
    <property type="entry name" value="RIBOSOMALS17"/>
</dbReference>
<dbReference type="SUPFAM" id="SSF50249">
    <property type="entry name" value="Nucleic acid-binding proteins"/>
    <property type="match status" value="1"/>
</dbReference>
<dbReference type="PROSITE" id="PS00056">
    <property type="entry name" value="RIBOSOMAL_S17"/>
    <property type="match status" value="1"/>
</dbReference>
<feature type="chain" id="PRO_1000054934" description="Small ribosomal subunit protein uS17">
    <location>
        <begin position="1"/>
        <end position="83"/>
    </location>
</feature>
<gene>
    <name evidence="1" type="primary">rpsQ</name>
    <name type="ordered locus">CHAB381_0093</name>
</gene>
<organism>
    <name type="scientific">Campylobacter hominis (strain ATCC BAA-381 / DSM 21671 / CCUG 45161 / LMG 19568 / NCTC 13146 / CH001A)</name>
    <dbReference type="NCBI Taxonomy" id="360107"/>
    <lineage>
        <taxon>Bacteria</taxon>
        <taxon>Pseudomonadati</taxon>
        <taxon>Campylobacterota</taxon>
        <taxon>Epsilonproteobacteria</taxon>
        <taxon>Campylobacterales</taxon>
        <taxon>Campylobacteraceae</taxon>
        <taxon>Campylobacter</taxon>
    </lineage>
</organism>